<organism>
    <name type="scientific">Ruegeria sp. (strain TM1040)</name>
    <name type="common">Silicibacter sp.</name>
    <dbReference type="NCBI Taxonomy" id="292414"/>
    <lineage>
        <taxon>Bacteria</taxon>
        <taxon>Pseudomonadati</taxon>
        <taxon>Pseudomonadota</taxon>
        <taxon>Alphaproteobacteria</taxon>
        <taxon>Rhodobacterales</taxon>
        <taxon>Roseobacteraceae</taxon>
        <taxon>Ruegeria</taxon>
    </lineage>
</organism>
<sequence>MAREYPLELYRNFGIMAHIDAGKTTCSERILFYTGKSHNIGEVHDGAATMDWMEQEQERGITITSAATTTFWERTEDGETADTPKHRLNIIDTPGHVDFTIEVERSLAVLDGAVCVLDANAGVEPQTETVWRQADRYKVPRMVFVNKMDKIGADFFNCVRMIEDRTGARAVPVGIPIGAENELEGLIDLVTMKEWLWQGEDLGASWVQVDIRDSLKEMAEEWRGKMIEAAVEMDDDAMENYLMDGAEPDVATLRSLLRKGTLSLSFVPVLGGSAFKNKGVQPLLNAVIDYLPSPLDVVDYMGFKPGDEEEVRNIARRADDDMAFSGLAFKIMNDPFVGSLTFTRIYSGVLNKGDSILNSTKGKKERIGRMMMMHSNNREEIEEAFAGDIIALAGLKDTTTGDTLCDAKEPVVLETMTFPDPVIEIAVEPKTKGDQEKMSQGLARLAAEDPSFRVETDLESGQTIMKGMGELHLDILVDRLKREFKVEANIGAPQVAYRETIGHEVEHTYTHKKQSGGSGQFAEVKMIISPTEAGEGYSFESRIVGGSVPKEYIPGVEKGINSVMDSGPLAGFPVIDFKVALIDGKFHDVDSSVLAFEIAARMCMREGMRKAGAKLLEPIMKVEVITPEEYTGGIIGDLTSRRGQVSGQEPRGNAIAIDANVPLANMFGYINTLRSMSSGRAQFTMQFSHYDPVPQNISEEIQAKYA</sequence>
<dbReference type="EMBL" id="CP000377">
    <property type="protein sequence ID" value="ABF62974.1"/>
    <property type="molecule type" value="Genomic_DNA"/>
</dbReference>
<dbReference type="RefSeq" id="WP_011537604.1">
    <property type="nucleotide sequence ID" value="NC_008044.1"/>
</dbReference>
<dbReference type="SMR" id="Q1GK42"/>
<dbReference type="STRING" id="292414.TM1040_0241"/>
<dbReference type="KEGG" id="sit:TM1040_0241"/>
<dbReference type="eggNOG" id="COG0480">
    <property type="taxonomic scope" value="Bacteria"/>
</dbReference>
<dbReference type="HOGENOM" id="CLU_002794_4_2_5"/>
<dbReference type="OrthoDB" id="9802948at2"/>
<dbReference type="Proteomes" id="UP000000636">
    <property type="component" value="Chromosome"/>
</dbReference>
<dbReference type="GO" id="GO:0005737">
    <property type="term" value="C:cytoplasm"/>
    <property type="evidence" value="ECO:0007669"/>
    <property type="project" value="UniProtKB-SubCell"/>
</dbReference>
<dbReference type="GO" id="GO:0005525">
    <property type="term" value="F:GTP binding"/>
    <property type="evidence" value="ECO:0007669"/>
    <property type="project" value="UniProtKB-UniRule"/>
</dbReference>
<dbReference type="GO" id="GO:0003924">
    <property type="term" value="F:GTPase activity"/>
    <property type="evidence" value="ECO:0007669"/>
    <property type="project" value="InterPro"/>
</dbReference>
<dbReference type="GO" id="GO:0003746">
    <property type="term" value="F:translation elongation factor activity"/>
    <property type="evidence" value="ECO:0007669"/>
    <property type="project" value="UniProtKB-UniRule"/>
</dbReference>
<dbReference type="GO" id="GO:0032790">
    <property type="term" value="P:ribosome disassembly"/>
    <property type="evidence" value="ECO:0007669"/>
    <property type="project" value="TreeGrafter"/>
</dbReference>
<dbReference type="CDD" id="cd01886">
    <property type="entry name" value="EF-G"/>
    <property type="match status" value="1"/>
</dbReference>
<dbReference type="CDD" id="cd16262">
    <property type="entry name" value="EFG_III"/>
    <property type="match status" value="1"/>
</dbReference>
<dbReference type="CDD" id="cd01434">
    <property type="entry name" value="EFG_mtEFG1_IV"/>
    <property type="match status" value="1"/>
</dbReference>
<dbReference type="CDD" id="cd03713">
    <property type="entry name" value="EFG_mtEFG_C"/>
    <property type="match status" value="1"/>
</dbReference>
<dbReference type="CDD" id="cd04088">
    <property type="entry name" value="EFG_mtEFG_II"/>
    <property type="match status" value="1"/>
</dbReference>
<dbReference type="FunFam" id="2.40.30.10:FF:000006">
    <property type="entry name" value="Elongation factor G"/>
    <property type="match status" value="1"/>
</dbReference>
<dbReference type="FunFam" id="3.30.230.10:FF:000003">
    <property type="entry name" value="Elongation factor G"/>
    <property type="match status" value="1"/>
</dbReference>
<dbReference type="FunFam" id="3.30.70.240:FF:000001">
    <property type="entry name" value="Elongation factor G"/>
    <property type="match status" value="1"/>
</dbReference>
<dbReference type="FunFam" id="3.30.70.870:FF:000001">
    <property type="entry name" value="Elongation factor G"/>
    <property type="match status" value="1"/>
</dbReference>
<dbReference type="FunFam" id="3.40.50.300:FF:000029">
    <property type="entry name" value="Elongation factor G"/>
    <property type="match status" value="1"/>
</dbReference>
<dbReference type="Gene3D" id="3.30.230.10">
    <property type="match status" value="1"/>
</dbReference>
<dbReference type="Gene3D" id="3.30.70.240">
    <property type="match status" value="1"/>
</dbReference>
<dbReference type="Gene3D" id="3.30.70.870">
    <property type="entry name" value="Elongation Factor G (Translational Gtpase), domain 3"/>
    <property type="match status" value="1"/>
</dbReference>
<dbReference type="Gene3D" id="3.40.50.300">
    <property type="entry name" value="P-loop containing nucleotide triphosphate hydrolases"/>
    <property type="match status" value="1"/>
</dbReference>
<dbReference type="Gene3D" id="2.40.30.10">
    <property type="entry name" value="Translation factors"/>
    <property type="match status" value="1"/>
</dbReference>
<dbReference type="HAMAP" id="MF_00054_B">
    <property type="entry name" value="EF_G_EF_2_B"/>
    <property type="match status" value="1"/>
</dbReference>
<dbReference type="InterPro" id="IPR053905">
    <property type="entry name" value="EF-G-like_DII"/>
</dbReference>
<dbReference type="InterPro" id="IPR041095">
    <property type="entry name" value="EFG_II"/>
</dbReference>
<dbReference type="InterPro" id="IPR009022">
    <property type="entry name" value="EFG_III"/>
</dbReference>
<dbReference type="InterPro" id="IPR035647">
    <property type="entry name" value="EFG_III/V"/>
</dbReference>
<dbReference type="InterPro" id="IPR047872">
    <property type="entry name" value="EFG_IV"/>
</dbReference>
<dbReference type="InterPro" id="IPR035649">
    <property type="entry name" value="EFG_V"/>
</dbReference>
<dbReference type="InterPro" id="IPR000640">
    <property type="entry name" value="EFG_V-like"/>
</dbReference>
<dbReference type="InterPro" id="IPR031157">
    <property type="entry name" value="G_TR_CS"/>
</dbReference>
<dbReference type="InterPro" id="IPR027417">
    <property type="entry name" value="P-loop_NTPase"/>
</dbReference>
<dbReference type="InterPro" id="IPR020568">
    <property type="entry name" value="Ribosomal_Su5_D2-typ_SF"/>
</dbReference>
<dbReference type="InterPro" id="IPR014721">
    <property type="entry name" value="Ribsml_uS5_D2-typ_fold_subgr"/>
</dbReference>
<dbReference type="InterPro" id="IPR005225">
    <property type="entry name" value="Small_GTP-bd"/>
</dbReference>
<dbReference type="InterPro" id="IPR000795">
    <property type="entry name" value="T_Tr_GTP-bd_dom"/>
</dbReference>
<dbReference type="InterPro" id="IPR009000">
    <property type="entry name" value="Transl_B-barrel_sf"/>
</dbReference>
<dbReference type="InterPro" id="IPR004540">
    <property type="entry name" value="Transl_elong_EFG/EF2"/>
</dbReference>
<dbReference type="InterPro" id="IPR005517">
    <property type="entry name" value="Transl_elong_EFG/EF2_IV"/>
</dbReference>
<dbReference type="NCBIfam" id="TIGR00484">
    <property type="entry name" value="EF-G"/>
    <property type="match status" value="1"/>
</dbReference>
<dbReference type="NCBIfam" id="NF009381">
    <property type="entry name" value="PRK12740.1-5"/>
    <property type="match status" value="1"/>
</dbReference>
<dbReference type="NCBIfam" id="TIGR00231">
    <property type="entry name" value="small_GTP"/>
    <property type="match status" value="1"/>
</dbReference>
<dbReference type="PANTHER" id="PTHR43261:SF1">
    <property type="entry name" value="RIBOSOME-RELEASING FACTOR 2, MITOCHONDRIAL"/>
    <property type="match status" value="1"/>
</dbReference>
<dbReference type="PANTHER" id="PTHR43261">
    <property type="entry name" value="TRANSLATION ELONGATION FACTOR G-RELATED"/>
    <property type="match status" value="1"/>
</dbReference>
<dbReference type="Pfam" id="PF22042">
    <property type="entry name" value="EF-G_D2"/>
    <property type="match status" value="1"/>
</dbReference>
<dbReference type="Pfam" id="PF00679">
    <property type="entry name" value="EFG_C"/>
    <property type="match status" value="1"/>
</dbReference>
<dbReference type="Pfam" id="PF14492">
    <property type="entry name" value="EFG_III"/>
    <property type="match status" value="1"/>
</dbReference>
<dbReference type="Pfam" id="PF03764">
    <property type="entry name" value="EFG_IV"/>
    <property type="match status" value="1"/>
</dbReference>
<dbReference type="Pfam" id="PF00009">
    <property type="entry name" value="GTP_EFTU"/>
    <property type="match status" value="1"/>
</dbReference>
<dbReference type="PRINTS" id="PR00315">
    <property type="entry name" value="ELONGATNFCT"/>
</dbReference>
<dbReference type="SMART" id="SM00838">
    <property type="entry name" value="EFG_C"/>
    <property type="match status" value="1"/>
</dbReference>
<dbReference type="SMART" id="SM00889">
    <property type="entry name" value="EFG_IV"/>
    <property type="match status" value="1"/>
</dbReference>
<dbReference type="SUPFAM" id="SSF54980">
    <property type="entry name" value="EF-G C-terminal domain-like"/>
    <property type="match status" value="2"/>
</dbReference>
<dbReference type="SUPFAM" id="SSF52540">
    <property type="entry name" value="P-loop containing nucleoside triphosphate hydrolases"/>
    <property type="match status" value="1"/>
</dbReference>
<dbReference type="SUPFAM" id="SSF54211">
    <property type="entry name" value="Ribosomal protein S5 domain 2-like"/>
    <property type="match status" value="1"/>
</dbReference>
<dbReference type="SUPFAM" id="SSF50447">
    <property type="entry name" value="Translation proteins"/>
    <property type="match status" value="1"/>
</dbReference>
<dbReference type="PROSITE" id="PS00301">
    <property type="entry name" value="G_TR_1"/>
    <property type="match status" value="1"/>
</dbReference>
<dbReference type="PROSITE" id="PS51722">
    <property type="entry name" value="G_TR_2"/>
    <property type="match status" value="1"/>
</dbReference>
<comment type="function">
    <text evidence="1">Catalyzes the GTP-dependent ribosomal translocation step during translation elongation. During this step, the ribosome changes from the pre-translocational (PRE) to the post-translocational (POST) state as the newly formed A-site-bound peptidyl-tRNA and P-site-bound deacylated tRNA move to the P and E sites, respectively. Catalyzes the coordinated movement of the two tRNA molecules, the mRNA and conformational changes in the ribosome.</text>
</comment>
<comment type="subcellular location">
    <subcellularLocation>
        <location evidence="1">Cytoplasm</location>
    </subcellularLocation>
</comment>
<comment type="similarity">
    <text evidence="1">Belongs to the TRAFAC class translation factor GTPase superfamily. Classic translation factor GTPase family. EF-G/EF-2 subfamily.</text>
</comment>
<protein>
    <recommendedName>
        <fullName evidence="1">Elongation factor G</fullName>
        <shortName evidence="1">EF-G</shortName>
    </recommendedName>
</protein>
<reference key="1">
    <citation type="submission" date="2006-05" db="EMBL/GenBank/DDBJ databases">
        <title>Complete sequence of chromosome of Silicibacter sp. TM1040.</title>
        <authorList>
            <consortium name="US DOE Joint Genome Institute"/>
            <person name="Copeland A."/>
            <person name="Lucas S."/>
            <person name="Lapidus A."/>
            <person name="Barry K."/>
            <person name="Detter J.C."/>
            <person name="Glavina del Rio T."/>
            <person name="Hammon N."/>
            <person name="Israni S."/>
            <person name="Dalin E."/>
            <person name="Tice H."/>
            <person name="Pitluck S."/>
            <person name="Brettin T."/>
            <person name="Bruce D."/>
            <person name="Han C."/>
            <person name="Tapia R."/>
            <person name="Goodwin L."/>
            <person name="Thompson L.S."/>
            <person name="Gilna P."/>
            <person name="Schmutz J."/>
            <person name="Larimer F."/>
            <person name="Land M."/>
            <person name="Hauser L."/>
            <person name="Kyrpides N."/>
            <person name="Kim E."/>
            <person name="Belas R."/>
            <person name="Moran M.A."/>
            <person name="Buchan A."/>
            <person name="Gonzalez J.M."/>
            <person name="Schell M.A."/>
            <person name="Sun F."/>
            <person name="Richardson P."/>
        </authorList>
    </citation>
    <scope>NUCLEOTIDE SEQUENCE [LARGE SCALE GENOMIC DNA]</scope>
    <source>
        <strain>TM1040</strain>
    </source>
</reference>
<keyword id="KW-0963">Cytoplasm</keyword>
<keyword id="KW-0251">Elongation factor</keyword>
<keyword id="KW-0342">GTP-binding</keyword>
<keyword id="KW-0547">Nucleotide-binding</keyword>
<keyword id="KW-0648">Protein biosynthesis</keyword>
<keyword id="KW-1185">Reference proteome</keyword>
<accession>Q1GK42</accession>
<evidence type="ECO:0000255" key="1">
    <source>
        <dbReference type="HAMAP-Rule" id="MF_00054"/>
    </source>
</evidence>
<proteinExistence type="inferred from homology"/>
<feature type="chain" id="PRO_0000263511" description="Elongation factor G">
    <location>
        <begin position="1"/>
        <end position="706"/>
    </location>
</feature>
<feature type="domain" description="tr-type G">
    <location>
        <begin position="8"/>
        <end position="295"/>
    </location>
</feature>
<feature type="binding site" evidence="1">
    <location>
        <begin position="17"/>
        <end position="24"/>
    </location>
    <ligand>
        <name>GTP</name>
        <dbReference type="ChEBI" id="CHEBI:37565"/>
    </ligand>
</feature>
<feature type="binding site" evidence="1">
    <location>
        <begin position="92"/>
        <end position="96"/>
    </location>
    <ligand>
        <name>GTP</name>
        <dbReference type="ChEBI" id="CHEBI:37565"/>
    </ligand>
</feature>
<feature type="binding site" evidence="1">
    <location>
        <begin position="146"/>
        <end position="149"/>
    </location>
    <ligand>
        <name>GTP</name>
        <dbReference type="ChEBI" id="CHEBI:37565"/>
    </ligand>
</feature>
<gene>
    <name evidence="1" type="primary">fusA</name>
    <name type="ordered locus">TM1040_0241</name>
</gene>
<name>EFG_RUEST</name>